<comment type="function">
    <text evidence="1">May be involved in recombination.</text>
</comment>
<comment type="subcellular location">
    <subcellularLocation>
        <location evidence="1">Cytoplasm</location>
        <location evidence="1">Nucleoid</location>
    </subcellularLocation>
</comment>
<comment type="similarity">
    <text evidence="1">Belongs to the RdgC family.</text>
</comment>
<organism>
    <name type="scientific">Escherichia coli O127:H6 (strain E2348/69 / EPEC)</name>
    <dbReference type="NCBI Taxonomy" id="574521"/>
    <lineage>
        <taxon>Bacteria</taxon>
        <taxon>Pseudomonadati</taxon>
        <taxon>Pseudomonadota</taxon>
        <taxon>Gammaproteobacteria</taxon>
        <taxon>Enterobacterales</taxon>
        <taxon>Enterobacteriaceae</taxon>
        <taxon>Escherichia</taxon>
    </lineage>
</organism>
<keyword id="KW-0963">Cytoplasm</keyword>
<keyword id="KW-0233">DNA recombination</keyword>
<keyword id="KW-1185">Reference proteome</keyword>
<accession>B7UJL7</accession>
<reference key="1">
    <citation type="journal article" date="2009" name="J. Bacteriol.">
        <title>Complete genome sequence and comparative genome analysis of enteropathogenic Escherichia coli O127:H6 strain E2348/69.</title>
        <authorList>
            <person name="Iguchi A."/>
            <person name="Thomson N.R."/>
            <person name="Ogura Y."/>
            <person name="Saunders D."/>
            <person name="Ooka T."/>
            <person name="Henderson I.R."/>
            <person name="Harris D."/>
            <person name="Asadulghani M."/>
            <person name="Kurokawa K."/>
            <person name="Dean P."/>
            <person name="Kenny B."/>
            <person name="Quail M.A."/>
            <person name="Thurston S."/>
            <person name="Dougan G."/>
            <person name="Hayashi T."/>
            <person name="Parkhill J."/>
            <person name="Frankel G."/>
        </authorList>
    </citation>
    <scope>NUCLEOTIDE SEQUENCE [LARGE SCALE GENOMIC DNA]</scope>
    <source>
        <strain>E2348/69 / EPEC</strain>
    </source>
</reference>
<gene>
    <name evidence="1" type="primary">rdgC</name>
    <name type="ordered locus">E2348C_0329</name>
</gene>
<proteinExistence type="inferred from homology"/>
<dbReference type="EMBL" id="FM180568">
    <property type="protein sequence ID" value="CAS07877.1"/>
    <property type="molecule type" value="Genomic_DNA"/>
</dbReference>
<dbReference type="RefSeq" id="WP_001298537.1">
    <property type="nucleotide sequence ID" value="NC_011601.1"/>
</dbReference>
<dbReference type="SMR" id="B7UJL7"/>
<dbReference type="GeneID" id="75202816"/>
<dbReference type="KEGG" id="ecg:E2348C_0329"/>
<dbReference type="HOGENOM" id="CLU_052038_1_1_6"/>
<dbReference type="Proteomes" id="UP000008205">
    <property type="component" value="Chromosome"/>
</dbReference>
<dbReference type="GO" id="GO:0043590">
    <property type="term" value="C:bacterial nucleoid"/>
    <property type="evidence" value="ECO:0007669"/>
    <property type="project" value="TreeGrafter"/>
</dbReference>
<dbReference type="GO" id="GO:0005737">
    <property type="term" value="C:cytoplasm"/>
    <property type="evidence" value="ECO:0007669"/>
    <property type="project" value="UniProtKB-UniRule"/>
</dbReference>
<dbReference type="GO" id="GO:0003690">
    <property type="term" value="F:double-stranded DNA binding"/>
    <property type="evidence" value="ECO:0007669"/>
    <property type="project" value="TreeGrafter"/>
</dbReference>
<dbReference type="GO" id="GO:0006310">
    <property type="term" value="P:DNA recombination"/>
    <property type="evidence" value="ECO:0007669"/>
    <property type="project" value="UniProtKB-UniRule"/>
</dbReference>
<dbReference type="GO" id="GO:0000018">
    <property type="term" value="P:regulation of DNA recombination"/>
    <property type="evidence" value="ECO:0007669"/>
    <property type="project" value="TreeGrafter"/>
</dbReference>
<dbReference type="HAMAP" id="MF_00194">
    <property type="entry name" value="RdgC"/>
    <property type="match status" value="1"/>
</dbReference>
<dbReference type="InterPro" id="IPR007476">
    <property type="entry name" value="RdgC"/>
</dbReference>
<dbReference type="NCBIfam" id="NF001460">
    <property type="entry name" value="PRK00321.1-1"/>
    <property type="match status" value="1"/>
</dbReference>
<dbReference type="NCBIfam" id="NF001462">
    <property type="entry name" value="PRK00321.1-3"/>
    <property type="match status" value="1"/>
</dbReference>
<dbReference type="NCBIfam" id="NF001464">
    <property type="entry name" value="PRK00321.1-5"/>
    <property type="match status" value="1"/>
</dbReference>
<dbReference type="PANTHER" id="PTHR38103">
    <property type="entry name" value="RECOMBINATION-ASSOCIATED PROTEIN RDGC"/>
    <property type="match status" value="1"/>
</dbReference>
<dbReference type="PANTHER" id="PTHR38103:SF1">
    <property type="entry name" value="RECOMBINATION-ASSOCIATED PROTEIN RDGC"/>
    <property type="match status" value="1"/>
</dbReference>
<dbReference type="Pfam" id="PF04381">
    <property type="entry name" value="RdgC"/>
    <property type="match status" value="1"/>
</dbReference>
<protein>
    <recommendedName>
        <fullName evidence="1">Recombination-associated protein RdgC</fullName>
    </recommendedName>
</protein>
<evidence type="ECO:0000255" key="1">
    <source>
        <dbReference type="HAMAP-Rule" id="MF_00194"/>
    </source>
</evidence>
<name>RDGC_ECO27</name>
<sequence length="303" mass="33993">MLWFKNLMVYRLSREISLRAEEMEKQLASMAFTPCGSQDMAKMGWVPPMGSHSDALTHVANGQIVICARKEEKILPSPVIKQALEAKIAKLEAEQARKLKKTEKDSLKDEVLHSLLPRAFSRFSQTMMWIDTVNGLIMVDCASAKKAEDTLALLRKSLGSLPVVPLSMENPIELTLTEWVRSGSAAQGFQLLDEAELKSLLEDGGVIRAKKQDLTSEEITNHIEAGKVVTKLALDWQQRIQFVMCDDGSLKRLKFCDELRDQNEDIDREDFAQRFDADFILMTGELAALIQNLIEGLGGEAQR</sequence>
<feature type="chain" id="PRO_1000193275" description="Recombination-associated protein RdgC">
    <location>
        <begin position="1"/>
        <end position="303"/>
    </location>
</feature>